<keyword id="KW-0106">Calcium</keyword>
<keyword id="KW-1003">Cell membrane</keyword>
<keyword id="KW-0406">Ion transport</keyword>
<keyword id="KW-0460">Magnesium</keyword>
<keyword id="KW-0472">Membrane</keyword>
<keyword id="KW-0479">Metal-binding</keyword>
<keyword id="KW-0630">Potassium</keyword>
<keyword id="KW-1185">Reference proteome</keyword>
<keyword id="KW-0915">Sodium</keyword>
<keyword id="KW-0739">Sodium transport</keyword>
<keyword id="KW-1278">Translocase</keyword>
<keyword id="KW-0812">Transmembrane</keyword>
<keyword id="KW-1133">Transmembrane helix</keyword>
<keyword id="KW-0813">Transport</keyword>
<comment type="function">
    <text evidence="2">Sodium pump that utilizes the energy of pyrophosphate hydrolysis as the driving force for Na(+) movement across the membrane.</text>
</comment>
<comment type="catalytic activity">
    <reaction evidence="2">
        <text>Na(+)(in) + diphosphate + H2O = Na(+)(out) + 2 phosphate + H(+)</text>
        <dbReference type="Rhea" id="RHEA:57884"/>
        <dbReference type="ChEBI" id="CHEBI:15377"/>
        <dbReference type="ChEBI" id="CHEBI:15378"/>
        <dbReference type="ChEBI" id="CHEBI:29101"/>
        <dbReference type="ChEBI" id="CHEBI:33019"/>
        <dbReference type="ChEBI" id="CHEBI:43474"/>
        <dbReference type="EC" id="7.2.3.1"/>
    </reaction>
</comment>
<comment type="cofactor">
    <cofactor evidence="2">
        <name>Mg(2+)</name>
        <dbReference type="ChEBI" id="CHEBI:18420"/>
    </cofactor>
</comment>
<comment type="activity regulation">
    <text evidence="2">Requires K(+) for maximal activity.</text>
</comment>
<comment type="subunit">
    <text evidence="2">Homodimer.</text>
</comment>
<comment type="subcellular location">
    <subcellularLocation>
        <location evidence="2">Cell membrane</location>
        <topology evidence="2">Multi-pass membrane protein</topology>
    </subcellularLocation>
</comment>
<comment type="similarity">
    <text evidence="2">Belongs to the H(+)-translocating pyrophosphatase (TC 3.A.10) family. K(+)-stimulated subfamily.</text>
</comment>
<comment type="sequence caution" evidence="3">
    <conflict type="erroneous initiation">
        <sequence resource="EMBL-CDS" id="AAM07230"/>
    </conflict>
    <text>Extended N-terminus.</text>
</comment>
<name>HPPA1_METAC</name>
<organism>
    <name type="scientific">Methanosarcina acetivorans (strain ATCC 35395 / DSM 2834 / JCM 12185 / C2A)</name>
    <dbReference type="NCBI Taxonomy" id="188937"/>
    <lineage>
        <taxon>Archaea</taxon>
        <taxon>Methanobacteriati</taxon>
        <taxon>Methanobacteriota</taxon>
        <taxon>Stenosarchaea group</taxon>
        <taxon>Methanomicrobia</taxon>
        <taxon>Methanosarcinales</taxon>
        <taxon>Methanosarcinaceae</taxon>
        <taxon>Methanosarcina</taxon>
    </lineage>
</organism>
<accession>Q8TJA9</accession>
<sequence length="676" mass="69277">MDMLIYLAPICALIGLIFAGISYKNVQNEGAGNDLIKKITASIHGGAMVYLNRQYRAIAVFVVFLAIIIALILPNGALTAACFVFGAVLSATAGYAGMLTATIANGRTTNAATRGIGPAFRVSFASGTVMGMSVVGLGLFGLSLSFIILESVYTDLDLLTIVNIVAGFSLGASSIALFARVGGGIFTKAADVGADLVGKVEAGIPEDDPRNPAVIADNVGDNVGDIAGMGADLYESYVGSILATMLLAASTAATTFPNIPVENVILVPLIISAIGILASIVGTFFVRTNKTESSAIHMAFNMGLIAAIILTVIASYFVTSMLLGEYGLNVFFATVAGLVAGFLIGQITEHYTSYDRKPTLRVANSCQTGSATNIITGFAKGMESTLWPVVIISIAIYIAFQLSGLYGIAIAAVGMLATLGISLSVDAYGPVADNAGGIAEMSHQKEEVRQITDTLDAVGNTTAAIGKGFAIGSAALTALALFASYGIAVGLSAIDVMNPNVFIGLTIGAMLPYLFSSMTILAVGNAAGEVVVEVRRQFREIAGLMEGKADPDYGKCIAISTHSALKEMIPPGLLAVIAPLLVGLVLGPGALGGLLAGSVASGFMIAITMSNAGGAWDNAKKYIELGNFGGKGSDAHKAGVTGDTVGDPFKDTAGPAINILIKLMSIVAVVFAPLFM</sequence>
<proteinExistence type="inferred from homology"/>
<gene>
    <name evidence="2" type="primary">hppA1</name>
    <name type="ordered locus">MA_3879</name>
</gene>
<protein>
    <recommendedName>
        <fullName evidence="2">Putative K(+)-stimulated pyrophosphate-energized sodium pump</fullName>
        <ecNumber evidence="2">7.2.3.1</ecNumber>
    </recommendedName>
    <alternativeName>
        <fullName evidence="2">Membrane-bound sodium-translocating pyrophosphatase</fullName>
    </alternativeName>
    <alternativeName>
        <fullName evidence="2">Pyrophosphate-energized inorganic pyrophosphatase</fullName>
        <shortName evidence="2">Na(+)-PPase</shortName>
    </alternativeName>
</protein>
<dbReference type="EC" id="7.2.3.1" evidence="2"/>
<dbReference type="EMBL" id="AE010299">
    <property type="protein sequence ID" value="AAM07230.1"/>
    <property type="status" value="ALT_INIT"/>
    <property type="molecule type" value="Genomic_DNA"/>
</dbReference>
<dbReference type="RefSeq" id="WP_048066544.1">
    <property type="nucleotide sequence ID" value="NC_003552.1"/>
</dbReference>
<dbReference type="SMR" id="Q8TJA9"/>
<dbReference type="EnsemblBacteria" id="AAM07230">
    <property type="protein sequence ID" value="AAM07230"/>
    <property type="gene ID" value="MA_3879"/>
</dbReference>
<dbReference type="GeneID" id="1475772"/>
<dbReference type="KEGG" id="mac:MA_3879"/>
<dbReference type="HOGENOM" id="CLU_008743_3_1_2"/>
<dbReference type="InParanoid" id="Q8TJA9"/>
<dbReference type="OrthoDB" id="53167at2157"/>
<dbReference type="PhylomeDB" id="Q8TJA9"/>
<dbReference type="Proteomes" id="UP000002487">
    <property type="component" value="Chromosome"/>
</dbReference>
<dbReference type="GO" id="GO:0005886">
    <property type="term" value="C:plasma membrane"/>
    <property type="evidence" value="ECO:0007669"/>
    <property type="project" value="UniProtKB-SubCell"/>
</dbReference>
<dbReference type="GO" id="GO:0009678">
    <property type="term" value="F:diphosphate hydrolysis-driven proton transmembrane transporter activity"/>
    <property type="evidence" value="ECO:0007669"/>
    <property type="project" value="UniProtKB-UniRule"/>
</dbReference>
<dbReference type="GO" id="GO:0004427">
    <property type="term" value="F:inorganic diphosphate phosphatase activity"/>
    <property type="evidence" value="ECO:0007669"/>
    <property type="project" value="UniProtKB-UniRule"/>
</dbReference>
<dbReference type="GO" id="GO:0000287">
    <property type="term" value="F:magnesium ion binding"/>
    <property type="evidence" value="ECO:0007669"/>
    <property type="project" value="UniProtKB-UniRule"/>
</dbReference>
<dbReference type="GO" id="GO:0030955">
    <property type="term" value="F:potassium ion binding"/>
    <property type="evidence" value="ECO:0007669"/>
    <property type="project" value="UniProtKB-UniRule"/>
</dbReference>
<dbReference type="GO" id="GO:0006814">
    <property type="term" value="P:sodium ion transport"/>
    <property type="evidence" value="ECO:0007669"/>
    <property type="project" value="UniProtKB-UniRule"/>
</dbReference>
<dbReference type="HAMAP" id="MF_01129">
    <property type="entry name" value="PPase_energized_pump"/>
    <property type="match status" value="1"/>
</dbReference>
<dbReference type="InterPro" id="IPR004131">
    <property type="entry name" value="PPase-energised_H-pump"/>
</dbReference>
<dbReference type="NCBIfam" id="NF001960">
    <property type="entry name" value="PRK00733.3-5"/>
    <property type="match status" value="1"/>
</dbReference>
<dbReference type="NCBIfam" id="TIGR01104">
    <property type="entry name" value="V_PPase"/>
    <property type="match status" value="1"/>
</dbReference>
<dbReference type="PANTHER" id="PTHR31998">
    <property type="entry name" value="K(+)-INSENSITIVE PYROPHOSPHATE-ENERGIZED PROTON PUMP"/>
    <property type="match status" value="1"/>
</dbReference>
<dbReference type="Pfam" id="PF03030">
    <property type="entry name" value="H_PPase"/>
    <property type="match status" value="1"/>
</dbReference>
<dbReference type="PIRSF" id="PIRSF001265">
    <property type="entry name" value="H+-PPase"/>
    <property type="match status" value="1"/>
</dbReference>
<evidence type="ECO:0000250" key="1"/>
<evidence type="ECO:0000255" key="2">
    <source>
        <dbReference type="HAMAP-Rule" id="MF_01129"/>
    </source>
</evidence>
<evidence type="ECO:0000305" key="3"/>
<reference key="1">
    <citation type="journal article" date="2002" name="Genome Res.">
        <title>The genome of Methanosarcina acetivorans reveals extensive metabolic and physiological diversity.</title>
        <authorList>
            <person name="Galagan J.E."/>
            <person name="Nusbaum C."/>
            <person name="Roy A."/>
            <person name="Endrizzi M.G."/>
            <person name="Macdonald P."/>
            <person name="FitzHugh W."/>
            <person name="Calvo S."/>
            <person name="Engels R."/>
            <person name="Smirnov S."/>
            <person name="Atnoor D."/>
            <person name="Brown A."/>
            <person name="Allen N."/>
            <person name="Naylor J."/>
            <person name="Stange-Thomann N."/>
            <person name="DeArellano K."/>
            <person name="Johnson R."/>
            <person name="Linton L."/>
            <person name="McEwan P."/>
            <person name="McKernan K."/>
            <person name="Talamas J."/>
            <person name="Tirrell A."/>
            <person name="Ye W."/>
            <person name="Zimmer A."/>
            <person name="Barber R.D."/>
            <person name="Cann I."/>
            <person name="Graham D.E."/>
            <person name="Grahame D.A."/>
            <person name="Guss A.M."/>
            <person name="Hedderich R."/>
            <person name="Ingram-Smith C."/>
            <person name="Kuettner H.C."/>
            <person name="Krzycki J.A."/>
            <person name="Leigh J.A."/>
            <person name="Li W."/>
            <person name="Liu J."/>
            <person name="Mukhopadhyay B."/>
            <person name="Reeve J.N."/>
            <person name="Smith K."/>
            <person name="Springer T.A."/>
            <person name="Umayam L.A."/>
            <person name="White O."/>
            <person name="White R.H."/>
            <person name="de Macario E.C."/>
            <person name="Ferry J.G."/>
            <person name="Jarrell K.F."/>
            <person name="Jing H."/>
            <person name="Macario A.J.L."/>
            <person name="Paulsen I.T."/>
            <person name="Pritchett M."/>
            <person name="Sowers K.R."/>
            <person name="Swanson R.V."/>
            <person name="Zinder S.H."/>
            <person name="Lander E."/>
            <person name="Metcalf W.W."/>
            <person name="Birren B."/>
        </authorList>
    </citation>
    <scope>NUCLEOTIDE SEQUENCE [LARGE SCALE GENOMIC DNA]</scope>
    <source>
        <strain>ATCC 35395 / DSM 2834 / JCM 12185 / C2A</strain>
    </source>
</reference>
<feature type="chain" id="PRO_0000217006" description="Putative K(+)-stimulated pyrophosphate-energized sodium pump">
    <location>
        <begin position="1"/>
        <end position="676"/>
    </location>
</feature>
<feature type="transmembrane region" description="Helical" evidence="2">
    <location>
        <begin position="3"/>
        <end position="23"/>
    </location>
</feature>
<feature type="transmembrane region" description="Helical" evidence="2">
    <location>
        <begin position="58"/>
        <end position="78"/>
    </location>
</feature>
<feature type="transmembrane region" description="Helical" evidence="2">
    <location>
        <begin position="83"/>
        <end position="103"/>
    </location>
</feature>
<feature type="transmembrane region" description="Helical" evidence="2">
    <location>
        <begin position="129"/>
        <end position="149"/>
    </location>
</feature>
<feature type="transmembrane region" description="Helical" evidence="2">
    <location>
        <begin position="158"/>
        <end position="178"/>
    </location>
</feature>
<feature type="transmembrane region" description="Helical" evidence="2">
    <location>
        <begin position="241"/>
        <end position="261"/>
    </location>
</feature>
<feature type="transmembrane region" description="Helical" evidence="2">
    <location>
        <begin position="265"/>
        <end position="285"/>
    </location>
</feature>
<feature type="transmembrane region" description="Helical" evidence="2">
    <location>
        <begin position="303"/>
        <end position="323"/>
    </location>
</feature>
<feature type="transmembrane region" description="Helical" evidence="2">
    <location>
        <begin position="327"/>
        <end position="347"/>
    </location>
</feature>
<feature type="transmembrane region" description="Helical" evidence="2">
    <location>
        <begin position="390"/>
        <end position="410"/>
    </location>
</feature>
<feature type="transmembrane region" description="Helical" evidence="2">
    <location>
        <begin position="411"/>
        <end position="431"/>
    </location>
</feature>
<feature type="transmembrane region" description="Helical" evidence="2">
    <location>
        <begin position="469"/>
        <end position="489"/>
    </location>
</feature>
<feature type="transmembrane region" description="Helical" evidence="2">
    <location>
        <begin position="501"/>
        <end position="521"/>
    </location>
</feature>
<feature type="transmembrane region" description="Helical" evidence="2">
    <location>
        <begin position="572"/>
        <end position="592"/>
    </location>
</feature>
<feature type="transmembrane region" description="Helical" evidence="2">
    <location>
        <begin position="593"/>
        <end position="613"/>
    </location>
</feature>
<feature type="transmembrane region" description="Helical" evidence="2">
    <location>
        <begin position="656"/>
        <end position="676"/>
    </location>
</feature>
<feature type="binding site" evidence="1">
    <location>
        <position position="188"/>
    </location>
    <ligand>
        <name>substrate</name>
    </ligand>
</feature>
<feature type="binding site" evidence="1">
    <location>
        <position position="191"/>
    </location>
    <ligand>
        <name>Mg(2+)</name>
        <dbReference type="ChEBI" id="CHEBI:18420"/>
        <label>1</label>
    </ligand>
</feature>
<feature type="binding site" evidence="1">
    <location>
        <position position="195"/>
    </location>
    <ligand>
        <name>Mg(2+)</name>
        <dbReference type="ChEBI" id="CHEBI:18420"/>
        <label>1</label>
    </ligand>
</feature>
<feature type="binding site" evidence="1">
    <location>
        <position position="218"/>
    </location>
    <ligand>
        <name>Mg(2+)</name>
        <dbReference type="ChEBI" id="CHEBI:18420"/>
        <label>2</label>
    </ligand>
</feature>
<feature type="binding site" evidence="1">
    <location>
        <position position="221"/>
    </location>
    <ligand>
        <name>Mg(2+)</name>
        <dbReference type="ChEBI" id="CHEBI:18420"/>
        <label>2</label>
    </ligand>
</feature>
<feature type="binding site" evidence="1">
    <location>
        <position position="433"/>
    </location>
    <ligand>
        <name>Mg(2+)</name>
        <dbReference type="ChEBI" id="CHEBI:18420"/>
        <label>2</label>
    </ligand>
</feature>
<feature type="binding site" evidence="1">
    <location>
        <position position="617"/>
    </location>
    <ligand>
        <name>Ca(2+)</name>
        <dbReference type="ChEBI" id="CHEBI:29108"/>
    </ligand>
</feature>
<feature type="binding site" evidence="1">
    <location>
        <position position="643"/>
    </location>
    <ligand>
        <name>Ca(2+)</name>
        <dbReference type="ChEBI" id="CHEBI:29108"/>
    </ligand>
</feature>
<feature type="binding site" evidence="1">
    <location>
        <position position="647"/>
    </location>
    <ligand>
        <name>Ca(2+)</name>
        <dbReference type="ChEBI" id="CHEBI:29108"/>
    </ligand>
</feature>
<feature type="binding site" evidence="1">
    <location>
        <position position="650"/>
    </location>
    <ligand>
        <name>substrate</name>
    </ligand>
</feature>
<feature type="site" description="Important for ion transport" evidence="1">
    <location>
        <position position="180"/>
    </location>
</feature>
<feature type="site" description="Important for ion transport" evidence="1">
    <location>
        <position position="225"/>
    </location>
</feature>
<feature type="site" description="Important for ion transport" evidence="1">
    <location>
        <position position="232"/>
    </location>
</feature>
<feature type="site" description="Important for potassium dependence" evidence="1">
    <location>
        <position position="463"/>
    </location>
</feature>
<feature type="site" description="Important for ion transport" evidence="1">
    <location>
        <position position="651"/>
    </location>
</feature>
<feature type="site" description="Important for ion transport" evidence="1">
    <location>
        <position position="662"/>
    </location>
</feature>